<proteinExistence type="inferred from homology"/>
<gene>
    <name evidence="1" type="primary">carA</name>
    <name type="ordered locus">MmarC7_0836</name>
</gene>
<organism>
    <name type="scientific">Methanococcus maripaludis (strain C7 / ATCC BAA-1331)</name>
    <dbReference type="NCBI Taxonomy" id="426368"/>
    <lineage>
        <taxon>Archaea</taxon>
        <taxon>Methanobacteriati</taxon>
        <taxon>Methanobacteriota</taxon>
        <taxon>Methanomada group</taxon>
        <taxon>Methanococci</taxon>
        <taxon>Methanococcales</taxon>
        <taxon>Methanococcaceae</taxon>
        <taxon>Methanococcus</taxon>
    </lineage>
</organism>
<name>CARA_METM7</name>
<reference key="1">
    <citation type="submission" date="2007-06" db="EMBL/GenBank/DDBJ databases">
        <title>Complete sequence of Methanococcus maripaludis C7.</title>
        <authorList>
            <consortium name="US DOE Joint Genome Institute"/>
            <person name="Copeland A."/>
            <person name="Lucas S."/>
            <person name="Lapidus A."/>
            <person name="Barry K."/>
            <person name="Glavina del Rio T."/>
            <person name="Dalin E."/>
            <person name="Tice H."/>
            <person name="Pitluck S."/>
            <person name="Clum A."/>
            <person name="Schmutz J."/>
            <person name="Larimer F."/>
            <person name="Land M."/>
            <person name="Hauser L."/>
            <person name="Kyrpides N."/>
            <person name="Anderson I."/>
            <person name="Sieprawska-Lupa M."/>
            <person name="Whitman W.B."/>
            <person name="Richardson P."/>
        </authorList>
    </citation>
    <scope>NUCLEOTIDE SEQUENCE [LARGE SCALE GENOMIC DNA]</scope>
    <source>
        <strain>C7 / ATCC BAA-1331</strain>
    </source>
</reference>
<protein>
    <recommendedName>
        <fullName evidence="1">Carbamoyl phosphate synthase small chain</fullName>
        <ecNumber evidence="1">6.3.5.5</ecNumber>
    </recommendedName>
    <alternativeName>
        <fullName evidence="1">Carbamoyl phosphate synthetase glutamine chain</fullName>
    </alternativeName>
</protein>
<sequence length="366" mass="40509">MYGILVLEDGTIIRGDGFGAEAEVLGELVFNTSMTGYVEILTDPSYKGQIITMTYPLEGNYGVEKEWFESDGIKAEGFVVKDMTGLELDEFLKEYNIPGISGVDTRYITRKIRSKGVIRSLLKTSTNPITKDEETELIKKVVEYPDISEIDLVPEVSTKETVTYNAENEKTSCVLIDCGVKQSIVNCLVERGCSVIKVPYNSKKEEILSYNPDFVLVSNGPGDPENMLETVDTVKNLIGTLPVTGICLGHQLITIALGGKTYKLKFGHRGGNQPVKDIESGKVYITSQNHGFATDDKIVPAGSELMHMNLNDDTVEGIRKIESEDIKNTVWSVQYHPEAGPGPHDARFLFDEMVELGIKFKAEKAY</sequence>
<comment type="function">
    <text evidence="1">Small subunit of the glutamine-dependent carbamoyl phosphate synthetase (CPSase). CPSase catalyzes the formation of carbamoyl phosphate from the ammonia moiety of glutamine, carbonate, and phosphate donated by ATP, constituting the first step of 2 biosynthetic pathways, one leading to arginine and/or urea and the other to pyrimidine nucleotides. The small subunit (glutamine amidotransferase) binds and cleaves glutamine to supply the large subunit with the substrate ammonia.</text>
</comment>
<comment type="catalytic activity">
    <reaction evidence="1">
        <text>hydrogencarbonate + L-glutamine + 2 ATP + H2O = carbamoyl phosphate + L-glutamate + 2 ADP + phosphate + 2 H(+)</text>
        <dbReference type="Rhea" id="RHEA:18633"/>
        <dbReference type="ChEBI" id="CHEBI:15377"/>
        <dbReference type="ChEBI" id="CHEBI:15378"/>
        <dbReference type="ChEBI" id="CHEBI:17544"/>
        <dbReference type="ChEBI" id="CHEBI:29985"/>
        <dbReference type="ChEBI" id="CHEBI:30616"/>
        <dbReference type="ChEBI" id="CHEBI:43474"/>
        <dbReference type="ChEBI" id="CHEBI:58228"/>
        <dbReference type="ChEBI" id="CHEBI:58359"/>
        <dbReference type="ChEBI" id="CHEBI:456216"/>
        <dbReference type="EC" id="6.3.5.5"/>
    </reaction>
</comment>
<comment type="catalytic activity">
    <molecule>Carbamoyl phosphate synthase small chain</molecule>
    <reaction evidence="1">
        <text>L-glutamine + H2O = L-glutamate + NH4(+)</text>
        <dbReference type="Rhea" id="RHEA:15889"/>
        <dbReference type="ChEBI" id="CHEBI:15377"/>
        <dbReference type="ChEBI" id="CHEBI:28938"/>
        <dbReference type="ChEBI" id="CHEBI:29985"/>
        <dbReference type="ChEBI" id="CHEBI:58359"/>
    </reaction>
</comment>
<comment type="pathway">
    <text evidence="1">Amino-acid biosynthesis; L-arginine biosynthesis; carbamoyl phosphate from bicarbonate: step 1/1.</text>
</comment>
<comment type="pathway">
    <text evidence="1">Pyrimidine metabolism; UMP biosynthesis via de novo pathway; (S)-dihydroorotate from bicarbonate: step 1/3.</text>
</comment>
<comment type="subunit">
    <text evidence="1">Composed of two chains; the small (or glutamine) chain promotes the hydrolysis of glutamine to ammonia, which is used by the large (or ammonia) chain to synthesize carbamoyl phosphate. Tetramer of heterodimers (alpha,beta)4.</text>
</comment>
<comment type="similarity">
    <text evidence="1">Belongs to the CarA family.</text>
</comment>
<feature type="chain" id="PRO_1000138869" description="Carbamoyl phosphate synthase small chain">
    <location>
        <begin position="1"/>
        <end position="366"/>
    </location>
</feature>
<feature type="domain" description="Glutamine amidotransferase type-1" evidence="1">
    <location>
        <begin position="172"/>
        <end position="363"/>
    </location>
</feature>
<feature type="region of interest" description="CPSase" evidence="1">
    <location>
        <begin position="1"/>
        <end position="172"/>
    </location>
</feature>
<feature type="active site" description="Nucleophile" evidence="1">
    <location>
        <position position="247"/>
    </location>
</feature>
<feature type="active site" evidence="1">
    <location>
        <position position="336"/>
    </location>
</feature>
<feature type="active site" evidence="1">
    <location>
        <position position="338"/>
    </location>
</feature>
<feature type="binding site" evidence="1">
    <location>
        <position position="45"/>
    </location>
    <ligand>
        <name>L-glutamine</name>
        <dbReference type="ChEBI" id="CHEBI:58359"/>
    </ligand>
</feature>
<feature type="binding site" evidence="1">
    <location>
        <position position="220"/>
    </location>
    <ligand>
        <name>L-glutamine</name>
        <dbReference type="ChEBI" id="CHEBI:58359"/>
    </ligand>
</feature>
<feature type="binding site" evidence="1">
    <location>
        <position position="222"/>
    </location>
    <ligand>
        <name>L-glutamine</name>
        <dbReference type="ChEBI" id="CHEBI:58359"/>
    </ligand>
</feature>
<feature type="binding site" evidence="1">
    <location>
        <position position="248"/>
    </location>
    <ligand>
        <name>L-glutamine</name>
        <dbReference type="ChEBI" id="CHEBI:58359"/>
    </ligand>
</feature>
<feature type="binding site" evidence="1">
    <location>
        <position position="251"/>
    </location>
    <ligand>
        <name>L-glutamine</name>
        <dbReference type="ChEBI" id="CHEBI:58359"/>
    </ligand>
</feature>
<feature type="binding site" evidence="1">
    <location>
        <position position="289"/>
    </location>
    <ligand>
        <name>L-glutamine</name>
        <dbReference type="ChEBI" id="CHEBI:58359"/>
    </ligand>
</feature>
<feature type="binding site" evidence="1">
    <location>
        <position position="291"/>
    </location>
    <ligand>
        <name>L-glutamine</name>
        <dbReference type="ChEBI" id="CHEBI:58359"/>
    </ligand>
</feature>
<feature type="binding site" evidence="1">
    <location>
        <position position="292"/>
    </location>
    <ligand>
        <name>L-glutamine</name>
        <dbReference type="ChEBI" id="CHEBI:58359"/>
    </ligand>
</feature>
<evidence type="ECO:0000255" key="1">
    <source>
        <dbReference type="HAMAP-Rule" id="MF_01209"/>
    </source>
</evidence>
<keyword id="KW-0028">Amino-acid biosynthesis</keyword>
<keyword id="KW-0055">Arginine biosynthesis</keyword>
<keyword id="KW-0067">ATP-binding</keyword>
<keyword id="KW-0315">Glutamine amidotransferase</keyword>
<keyword id="KW-0436">Ligase</keyword>
<keyword id="KW-0547">Nucleotide-binding</keyword>
<keyword id="KW-0665">Pyrimidine biosynthesis</keyword>
<accession>A6VHH7</accession>
<dbReference type="EC" id="6.3.5.5" evidence="1"/>
<dbReference type="EMBL" id="CP000745">
    <property type="protein sequence ID" value="ABR65903.1"/>
    <property type="molecule type" value="Genomic_DNA"/>
</dbReference>
<dbReference type="SMR" id="A6VHH7"/>
<dbReference type="STRING" id="426368.MmarC7_0836"/>
<dbReference type="KEGG" id="mmz:MmarC7_0836"/>
<dbReference type="eggNOG" id="arCOG00064">
    <property type="taxonomic scope" value="Archaea"/>
</dbReference>
<dbReference type="HOGENOM" id="CLU_035901_2_1_2"/>
<dbReference type="OrthoDB" id="7675at2157"/>
<dbReference type="UniPathway" id="UPA00068">
    <property type="reaction ID" value="UER00171"/>
</dbReference>
<dbReference type="UniPathway" id="UPA00070">
    <property type="reaction ID" value="UER00115"/>
</dbReference>
<dbReference type="GO" id="GO:0005524">
    <property type="term" value="F:ATP binding"/>
    <property type="evidence" value="ECO:0007669"/>
    <property type="project" value="UniProtKB-UniRule"/>
</dbReference>
<dbReference type="GO" id="GO:0004088">
    <property type="term" value="F:carbamoyl-phosphate synthase (glutamine-hydrolyzing) activity"/>
    <property type="evidence" value="ECO:0007669"/>
    <property type="project" value="UniProtKB-UniRule"/>
</dbReference>
<dbReference type="GO" id="GO:0004359">
    <property type="term" value="F:glutaminase activity"/>
    <property type="evidence" value="ECO:0007669"/>
    <property type="project" value="RHEA"/>
</dbReference>
<dbReference type="GO" id="GO:0006207">
    <property type="term" value="P:'de novo' pyrimidine nucleobase biosynthetic process"/>
    <property type="evidence" value="ECO:0007669"/>
    <property type="project" value="InterPro"/>
</dbReference>
<dbReference type="GO" id="GO:0044205">
    <property type="term" value="P:'de novo' UMP biosynthetic process"/>
    <property type="evidence" value="ECO:0007669"/>
    <property type="project" value="UniProtKB-UniRule"/>
</dbReference>
<dbReference type="GO" id="GO:0006541">
    <property type="term" value="P:glutamine metabolic process"/>
    <property type="evidence" value="ECO:0007669"/>
    <property type="project" value="InterPro"/>
</dbReference>
<dbReference type="GO" id="GO:0006526">
    <property type="term" value="P:L-arginine biosynthetic process"/>
    <property type="evidence" value="ECO:0007669"/>
    <property type="project" value="UniProtKB-UniRule"/>
</dbReference>
<dbReference type="CDD" id="cd01744">
    <property type="entry name" value="GATase1_CPSase"/>
    <property type="match status" value="1"/>
</dbReference>
<dbReference type="Gene3D" id="3.40.50.880">
    <property type="match status" value="1"/>
</dbReference>
<dbReference type="Gene3D" id="3.50.30.20">
    <property type="entry name" value="Carbamoyl-phosphate synthase small subunit, N-terminal domain"/>
    <property type="match status" value="1"/>
</dbReference>
<dbReference type="HAMAP" id="MF_01209">
    <property type="entry name" value="CPSase_S_chain"/>
    <property type="match status" value="1"/>
</dbReference>
<dbReference type="InterPro" id="IPR050472">
    <property type="entry name" value="Anth_synth/Amidotransfase"/>
</dbReference>
<dbReference type="InterPro" id="IPR006274">
    <property type="entry name" value="CarbamoylP_synth_ssu"/>
</dbReference>
<dbReference type="InterPro" id="IPR002474">
    <property type="entry name" value="CarbamoylP_synth_ssu_N"/>
</dbReference>
<dbReference type="InterPro" id="IPR036480">
    <property type="entry name" value="CarbP_synth_ssu_N_sf"/>
</dbReference>
<dbReference type="InterPro" id="IPR029062">
    <property type="entry name" value="Class_I_gatase-like"/>
</dbReference>
<dbReference type="InterPro" id="IPR035686">
    <property type="entry name" value="CPSase_GATase1"/>
</dbReference>
<dbReference type="InterPro" id="IPR017926">
    <property type="entry name" value="GATASE"/>
</dbReference>
<dbReference type="NCBIfam" id="TIGR01368">
    <property type="entry name" value="CPSaseIIsmall"/>
    <property type="match status" value="1"/>
</dbReference>
<dbReference type="NCBIfam" id="NF009475">
    <property type="entry name" value="PRK12838.1"/>
    <property type="match status" value="1"/>
</dbReference>
<dbReference type="PANTHER" id="PTHR43418:SF7">
    <property type="entry name" value="CARBAMOYL-PHOSPHATE SYNTHASE SMALL CHAIN"/>
    <property type="match status" value="1"/>
</dbReference>
<dbReference type="PANTHER" id="PTHR43418">
    <property type="entry name" value="MULTIFUNCTIONAL TRYPTOPHAN BIOSYNTHESIS PROTEIN-RELATED"/>
    <property type="match status" value="1"/>
</dbReference>
<dbReference type="Pfam" id="PF00988">
    <property type="entry name" value="CPSase_sm_chain"/>
    <property type="match status" value="1"/>
</dbReference>
<dbReference type="Pfam" id="PF00117">
    <property type="entry name" value="GATase"/>
    <property type="match status" value="1"/>
</dbReference>
<dbReference type="PRINTS" id="PR00097">
    <property type="entry name" value="ANTSNTHASEII"/>
</dbReference>
<dbReference type="PRINTS" id="PR00099">
    <property type="entry name" value="CPSGATASE"/>
</dbReference>
<dbReference type="PRINTS" id="PR00096">
    <property type="entry name" value="GATASE"/>
</dbReference>
<dbReference type="SMART" id="SM01097">
    <property type="entry name" value="CPSase_sm_chain"/>
    <property type="match status" value="1"/>
</dbReference>
<dbReference type="SUPFAM" id="SSF52021">
    <property type="entry name" value="Carbamoyl phosphate synthetase, small subunit N-terminal domain"/>
    <property type="match status" value="1"/>
</dbReference>
<dbReference type="SUPFAM" id="SSF52317">
    <property type="entry name" value="Class I glutamine amidotransferase-like"/>
    <property type="match status" value="1"/>
</dbReference>
<dbReference type="PROSITE" id="PS51273">
    <property type="entry name" value="GATASE_TYPE_1"/>
    <property type="match status" value="1"/>
</dbReference>